<dbReference type="EC" id="3.1.1.4" evidence="2"/>
<dbReference type="EMBL" id="AF166100">
    <property type="protein sequence ID" value="AAF04501.1"/>
    <property type="molecule type" value="mRNA"/>
</dbReference>
<dbReference type="RefSeq" id="NP_058872.1">
    <property type="nucleotide sequence ID" value="NM_017176.2"/>
</dbReference>
<dbReference type="SMR" id="Q9QZT3"/>
<dbReference type="FunCoup" id="Q9QZT3">
    <property type="interactions" value="250"/>
</dbReference>
<dbReference type="STRING" id="10116.ENSRNOP00000004237"/>
<dbReference type="PaxDb" id="10116-ENSRNOP00000004237"/>
<dbReference type="GeneID" id="29359"/>
<dbReference type="KEGG" id="rno:29359"/>
<dbReference type="UCSC" id="RGD:61935">
    <property type="organism name" value="rat"/>
</dbReference>
<dbReference type="AGR" id="RGD:61935"/>
<dbReference type="CTD" id="8399"/>
<dbReference type="RGD" id="61935">
    <property type="gene designation" value="Pla2g10"/>
</dbReference>
<dbReference type="eggNOG" id="KOG4087">
    <property type="taxonomic scope" value="Eukaryota"/>
</dbReference>
<dbReference type="InParanoid" id="Q9QZT3"/>
<dbReference type="PhylomeDB" id="Q9QZT3"/>
<dbReference type="Reactome" id="R-RNO-1482788">
    <property type="pathway name" value="Acyl chain remodelling of PC"/>
</dbReference>
<dbReference type="Reactome" id="R-RNO-1482801">
    <property type="pathway name" value="Acyl chain remodelling of PS"/>
</dbReference>
<dbReference type="Reactome" id="R-RNO-1482839">
    <property type="pathway name" value="Acyl chain remodelling of PE"/>
</dbReference>
<dbReference type="Reactome" id="R-RNO-1482922">
    <property type="pathway name" value="Acyl chain remodelling of PI"/>
</dbReference>
<dbReference type="Reactome" id="R-RNO-1482925">
    <property type="pathway name" value="Acyl chain remodelling of PG"/>
</dbReference>
<dbReference type="Reactome" id="R-RNO-1483166">
    <property type="pathway name" value="Synthesis of PA"/>
</dbReference>
<dbReference type="PRO" id="PR:Q9QZT3"/>
<dbReference type="Proteomes" id="UP000002494">
    <property type="component" value="Unplaced"/>
</dbReference>
<dbReference type="GO" id="GO:0001669">
    <property type="term" value="C:acrosomal vesicle"/>
    <property type="evidence" value="ECO:0000250"/>
    <property type="project" value="UniProtKB"/>
</dbReference>
<dbReference type="GO" id="GO:0005576">
    <property type="term" value="C:extracellular region"/>
    <property type="evidence" value="ECO:0000304"/>
    <property type="project" value="RGD"/>
</dbReference>
<dbReference type="GO" id="GO:0005615">
    <property type="term" value="C:extracellular space"/>
    <property type="evidence" value="ECO:0000266"/>
    <property type="project" value="RGD"/>
</dbReference>
<dbReference type="GO" id="GO:0005764">
    <property type="term" value="C:lysosome"/>
    <property type="evidence" value="ECO:0007669"/>
    <property type="project" value="UniProtKB-SubCell"/>
</dbReference>
<dbReference type="GO" id="GO:0003847">
    <property type="term" value="F:1-alkyl-2-acetylglycerophosphocholine esterase activity"/>
    <property type="evidence" value="ECO:0000250"/>
    <property type="project" value="UniProtKB"/>
</dbReference>
<dbReference type="GO" id="GO:0005509">
    <property type="term" value="F:calcium ion binding"/>
    <property type="evidence" value="ECO:0000318"/>
    <property type="project" value="GO_Central"/>
</dbReference>
<dbReference type="GO" id="GO:0047498">
    <property type="term" value="F:calcium-dependent phospholipase A2 activity"/>
    <property type="evidence" value="ECO:0000250"/>
    <property type="project" value="UniProtKB"/>
</dbReference>
<dbReference type="GO" id="GO:0004623">
    <property type="term" value="F:phospholipase A2 activity"/>
    <property type="evidence" value="ECO:0000314"/>
    <property type="project" value="RGD"/>
</dbReference>
<dbReference type="GO" id="GO:0004620">
    <property type="term" value="F:phospholipase activity"/>
    <property type="evidence" value="ECO:0000266"/>
    <property type="project" value="RGD"/>
</dbReference>
<dbReference type="GO" id="GO:0005543">
    <property type="term" value="F:phospholipid binding"/>
    <property type="evidence" value="ECO:0000318"/>
    <property type="project" value="GO_Central"/>
</dbReference>
<dbReference type="GO" id="GO:0050482">
    <property type="term" value="P:arachidonate secretion"/>
    <property type="evidence" value="ECO:0007669"/>
    <property type="project" value="InterPro"/>
</dbReference>
<dbReference type="GO" id="GO:0007411">
    <property type="term" value="P:axon guidance"/>
    <property type="evidence" value="ECO:0000266"/>
    <property type="project" value="RGD"/>
</dbReference>
<dbReference type="GO" id="GO:1990830">
    <property type="term" value="P:cellular response to leukemia inhibitory factor"/>
    <property type="evidence" value="ECO:0000266"/>
    <property type="project" value="RGD"/>
</dbReference>
<dbReference type="GO" id="GO:0042632">
    <property type="term" value="P:cholesterol homeostasis"/>
    <property type="evidence" value="ECO:0000266"/>
    <property type="project" value="RGD"/>
</dbReference>
<dbReference type="GO" id="GO:0051607">
    <property type="term" value="P:defense response to virus"/>
    <property type="evidence" value="ECO:0000266"/>
    <property type="project" value="RGD"/>
</dbReference>
<dbReference type="GO" id="GO:0043249">
    <property type="term" value="P:erythrocyte maturation"/>
    <property type="evidence" value="ECO:0000266"/>
    <property type="project" value="RGD"/>
</dbReference>
<dbReference type="GO" id="GO:0009566">
    <property type="term" value="P:fertilization"/>
    <property type="evidence" value="ECO:0000266"/>
    <property type="project" value="RGD"/>
</dbReference>
<dbReference type="GO" id="GO:0031069">
    <property type="term" value="P:hair follicle morphogenesis"/>
    <property type="evidence" value="ECO:0000266"/>
    <property type="project" value="RGD"/>
</dbReference>
<dbReference type="GO" id="GO:0036335">
    <property type="term" value="P:intestinal stem cell homeostasis"/>
    <property type="evidence" value="ECO:0000266"/>
    <property type="project" value="RGD"/>
</dbReference>
<dbReference type="GO" id="GO:0034374">
    <property type="term" value="P:low-density lipoprotein particle remodeling"/>
    <property type="evidence" value="ECO:0000266"/>
    <property type="project" value="RGD"/>
</dbReference>
<dbReference type="GO" id="GO:0051977">
    <property type="term" value="P:lysophospholipid transport"/>
    <property type="evidence" value="ECO:0000266"/>
    <property type="project" value="RGD"/>
</dbReference>
<dbReference type="GO" id="GO:0042116">
    <property type="term" value="P:macrophage activation"/>
    <property type="evidence" value="ECO:0000266"/>
    <property type="project" value="RGD"/>
</dbReference>
<dbReference type="GO" id="GO:0090370">
    <property type="term" value="P:negative regulation of cholesterol efflux"/>
    <property type="evidence" value="ECO:0000266"/>
    <property type="project" value="RGD"/>
</dbReference>
<dbReference type="GO" id="GO:1900016">
    <property type="term" value="P:negative regulation of cytokine production involved in inflammatory response"/>
    <property type="evidence" value="ECO:0000266"/>
    <property type="project" value="RGD"/>
</dbReference>
<dbReference type="GO" id="GO:0050728">
    <property type="term" value="P:negative regulation of inflammatory response"/>
    <property type="evidence" value="ECO:0000266"/>
    <property type="project" value="RGD"/>
</dbReference>
<dbReference type="GO" id="GO:0046473">
    <property type="term" value="P:phosphatidic acid metabolic process"/>
    <property type="evidence" value="ECO:0000250"/>
    <property type="project" value="UniProtKB"/>
</dbReference>
<dbReference type="GO" id="GO:0034638">
    <property type="term" value="P:phosphatidylcholine catabolic process"/>
    <property type="evidence" value="ECO:0000266"/>
    <property type="project" value="RGD"/>
</dbReference>
<dbReference type="GO" id="GO:0046470">
    <property type="term" value="P:phosphatidylcholine metabolic process"/>
    <property type="evidence" value="ECO:0000250"/>
    <property type="project" value="UniProtKB"/>
</dbReference>
<dbReference type="GO" id="GO:0046337">
    <property type="term" value="P:phosphatidylethanolamine metabolic process"/>
    <property type="evidence" value="ECO:0000250"/>
    <property type="project" value="UniProtKB"/>
</dbReference>
<dbReference type="GO" id="GO:0046471">
    <property type="term" value="P:phosphatidylglycerol metabolic process"/>
    <property type="evidence" value="ECO:0000250"/>
    <property type="project" value="UniProtKB"/>
</dbReference>
<dbReference type="GO" id="GO:0006658">
    <property type="term" value="P:phosphatidylserine metabolic process"/>
    <property type="evidence" value="ECO:0000250"/>
    <property type="project" value="UniProtKB"/>
</dbReference>
<dbReference type="GO" id="GO:0006644">
    <property type="term" value="P:phospholipid metabolic process"/>
    <property type="evidence" value="ECO:0000266"/>
    <property type="project" value="RGD"/>
</dbReference>
<dbReference type="GO" id="GO:0062234">
    <property type="term" value="P:platelet activating factor catabolic process"/>
    <property type="evidence" value="ECO:0000250"/>
    <property type="project" value="UniProtKB"/>
</dbReference>
<dbReference type="GO" id="GO:2000344">
    <property type="term" value="P:positive regulation of acrosome reaction"/>
    <property type="evidence" value="ECO:0000250"/>
    <property type="project" value="UniProtKB"/>
</dbReference>
<dbReference type="GO" id="GO:0090238">
    <property type="term" value="P:positive regulation of arachidonate secretion"/>
    <property type="evidence" value="ECO:0000266"/>
    <property type="project" value="RGD"/>
</dbReference>
<dbReference type="GO" id="GO:0010884">
    <property type="term" value="P:positive regulation of lipid storage"/>
    <property type="evidence" value="ECO:0000266"/>
    <property type="project" value="RGD"/>
</dbReference>
<dbReference type="GO" id="GO:0032308">
    <property type="term" value="P:positive regulation of prostaglandin secretion"/>
    <property type="evidence" value="ECO:0000266"/>
    <property type="project" value="RGD"/>
</dbReference>
<dbReference type="GO" id="GO:0051247">
    <property type="term" value="P:positive regulation of protein metabolic process"/>
    <property type="evidence" value="ECO:0000266"/>
    <property type="project" value="RGD"/>
</dbReference>
<dbReference type="GO" id="GO:0002532">
    <property type="term" value="P:production of molecular mediator involved in inflammatory response"/>
    <property type="evidence" value="ECO:0000266"/>
    <property type="project" value="RGD"/>
</dbReference>
<dbReference type="GO" id="GO:0001516">
    <property type="term" value="P:prostaglandin biosynthetic process"/>
    <property type="evidence" value="ECO:0000266"/>
    <property type="project" value="RGD"/>
</dbReference>
<dbReference type="GO" id="GO:0043030">
    <property type="term" value="P:regulation of macrophage activation"/>
    <property type="evidence" value="ECO:0000266"/>
    <property type="project" value="RGD"/>
</dbReference>
<dbReference type="CDD" id="cd00125">
    <property type="entry name" value="PLA2c"/>
    <property type="match status" value="1"/>
</dbReference>
<dbReference type="FunFam" id="1.20.90.10:FF:000001">
    <property type="entry name" value="Basic phospholipase A2 homolog"/>
    <property type="match status" value="1"/>
</dbReference>
<dbReference type="Gene3D" id="1.20.90.10">
    <property type="entry name" value="Phospholipase A2 domain"/>
    <property type="match status" value="1"/>
</dbReference>
<dbReference type="InterPro" id="IPR001211">
    <property type="entry name" value="PLipase_A2"/>
</dbReference>
<dbReference type="InterPro" id="IPR033112">
    <property type="entry name" value="PLipase_A2_Asp_AS"/>
</dbReference>
<dbReference type="InterPro" id="IPR016090">
    <property type="entry name" value="PLipase_A2_dom"/>
</dbReference>
<dbReference type="InterPro" id="IPR036444">
    <property type="entry name" value="PLipase_A2_dom_sf"/>
</dbReference>
<dbReference type="InterPro" id="IPR033113">
    <property type="entry name" value="PLipase_A2_His_AS"/>
</dbReference>
<dbReference type="PANTHER" id="PTHR11716:SF4">
    <property type="entry name" value="GROUP 10 SECRETORY PHOSPHOLIPASE A2"/>
    <property type="match status" value="1"/>
</dbReference>
<dbReference type="PANTHER" id="PTHR11716">
    <property type="entry name" value="PHOSPHOLIPASE A2 FAMILY MEMBER"/>
    <property type="match status" value="1"/>
</dbReference>
<dbReference type="Pfam" id="PF00068">
    <property type="entry name" value="Phospholip_A2_1"/>
    <property type="match status" value="1"/>
</dbReference>
<dbReference type="PRINTS" id="PR00389">
    <property type="entry name" value="PHPHLIPASEA2"/>
</dbReference>
<dbReference type="SMART" id="SM00085">
    <property type="entry name" value="PA2c"/>
    <property type="match status" value="1"/>
</dbReference>
<dbReference type="SUPFAM" id="SSF48619">
    <property type="entry name" value="Phospholipase A2, PLA2"/>
    <property type="match status" value="1"/>
</dbReference>
<dbReference type="PROSITE" id="PS00119">
    <property type="entry name" value="PA2_ASP"/>
    <property type="match status" value="1"/>
</dbReference>
<dbReference type="PROSITE" id="PS00118">
    <property type="entry name" value="PA2_HIS"/>
    <property type="match status" value="1"/>
</dbReference>
<sequence>MLLLLLLLLLGPGSCLSEATRRSHVYKRGLLELAGTLDCVGPRSPMAYMNYGCYCGLGGHGEPRDAIDWCCYYHDCCYSQAQDAGCSPKLYRYPWKCMDHRILCGPAENKCQELLCRCDETLAYCLADTEYHLKYLFFPSVLCEKDSPKCN</sequence>
<keyword id="KW-0106">Calcium</keyword>
<keyword id="KW-0165">Cleavage on pair of basic residues</keyword>
<keyword id="KW-0968">Cytoplasmic vesicle</keyword>
<keyword id="KW-1015">Disulfide bond</keyword>
<keyword id="KW-0378">Hydrolase</keyword>
<keyword id="KW-0443">Lipid metabolism</keyword>
<keyword id="KW-0458">Lysosome</keyword>
<keyword id="KW-0479">Metal-binding</keyword>
<keyword id="KW-1208">Phospholipid metabolism</keyword>
<keyword id="KW-1185">Reference proteome</keyword>
<keyword id="KW-0964">Secreted</keyword>
<keyword id="KW-0732">Signal</keyword>
<gene>
    <name type="primary">Pla2g10</name>
</gene>
<proteinExistence type="evidence at transcript level"/>
<protein>
    <recommendedName>
        <fullName>Group 10 secretory phospholipase A2</fullName>
        <ecNumber evidence="2">3.1.1.4</ecNumber>
    </recommendedName>
    <alternativeName>
        <fullName>Group X secretory phospholipase A2</fullName>
        <shortName>GX sPLA2</shortName>
        <shortName>sPLA2-X</shortName>
    </alternativeName>
    <alternativeName>
        <fullName>Phosphatidylcholine 2-acylhydrolase 10</fullName>
    </alternativeName>
</protein>
<reference key="1">
    <citation type="journal article" date="1999" name="J. Biol. Chem.">
        <title>On the diversity of secreted phospholipases A2. Cloning, tissue distribution, and functional expression of two novel mouse group II enzymes.</title>
        <authorList>
            <person name="Valentin E."/>
            <person name="Ghomashchi F."/>
            <person name="Gelb M.H."/>
            <person name="Lazdunski M."/>
            <person name="Lambeau G."/>
        </authorList>
    </citation>
    <scope>NUCLEOTIDE SEQUENCE [MRNA]</scope>
</reference>
<name>PA2GX_RAT</name>
<comment type="function">
    <text evidence="2 3">Secretory calcium-dependent phospholipase A2 that primarily targets extracellular phospholipids. Hydrolyzes the ester bond of the fatty acyl group attached at sn-2 position of phospholipids with preference for phosphatidylcholines and phosphatidylglycerols over phosphatidylethanolamines. Preferentially releases sn-2 omega-6 and omega-3 polyunsaturated fatty acyl (PUFA) chains over saturated fatty acyls. Contributes to phospholipid remodeling of very low-density lipoprotein (VLDL), low-density lipoprotein (LDL) and high-density lipoprotein (HDL) particles. Hydrolyzes LDL phospholipids releasing unsaturated fatty acids that regulate macrophage differentiation toward foam cells. Efficiently hydrolyzes and inactivates platelet activating factor (PAF), a potent lipid mediator present in oxidized LDL (By similarity). May act in an autocrine and paracrine manner. Secreted by lung epithelium, targets membrane phospholipids of infiltrating eosinophils, releasing arachidonate and boosting eicosanoid and cysteinyl leukotriene synthesis involved in airway inflammatory response. Secreted by gut epithelium, hydrolyzes dietary and biliary phosphatidylcholines in the gastrointestinal lumen. Plays a stem cell regulator role in colon epithelium. Within intracellular compartment, mediates Paneth-like cell differentiation and its stem cell supporting functions by inhibiting the Wnt signaling pathway in intestinal stem cell (ISC). Secreted in the intestinal lumen upon inflammation, acts in an autocrine way and promotes prostaglandin E2 synthesis that stimulates Wnt signaling pathway in ISCs and tissue regeneration. May participate in hair follicle morphogenesis by regulating phosphatidylethanolamines metabolism at the outermost epithelial layer and facilitating melanin synthesis. By releasing lysophosphatidylcholines (LPCs) at sperm acrosome, controls sperm cell capacitation, acrosome reaction and overall fertility. May promote neurite outgrowth in neuron fibers involved in nociception (By similarity). Contributes to lipid remodeling of cellular membranes and generation of lipid mediators involved in pathogen clearance. Cleaves sn-2 fatty acyl chains of phosphatidylglycerols and phosphatidylethanolamines, which are major components of membrane phospholipids in bacteria. Displays bactericidal activity against Gram-positive bacteria by directly hydrolyzing phospholipids of the bacterial membrane. In pulmonary epithelium, may contribute to host defense response against adenoviral infection. Prevents adenovirus entry into host cells by hydrolyzing host cell plasma membrane, releasing C16:0 LPCs that inhibit virus-mediated membrane fusion and viral infection. Likely prevents adenoviral entry into the endosomes of host cells (By similarity). May play a role in maturation and activation of innate immune cells including macrophages, group 2 innate lymphoid cells and mast cells (By similarity).</text>
</comment>
<comment type="catalytic activity">
    <reaction evidence="2 4 5">
        <text>a 1,2-diacyl-sn-glycero-3-phosphocholine + H2O = a 1-acyl-sn-glycero-3-phosphocholine + a fatty acid + H(+)</text>
        <dbReference type="Rhea" id="RHEA:15801"/>
        <dbReference type="ChEBI" id="CHEBI:15377"/>
        <dbReference type="ChEBI" id="CHEBI:15378"/>
        <dbReference type="ChEBI" id="CHEBI:28868"/>
        <dbReference type="ChEBI" id="CHEBI:57643"/>
        <dbReference type="ChEBI" id="CHEBI:58168"/>
        <dbReference type="EC" id="3.1.1.4"/>
    </reaction>
    <physiologicalReaction direction="left-to-right" evidence="2">
        <dbReference type="Rhea" id="RHEA:15802"/>
    </physiologicalReaction>
</comment>
<comment type="catalytic activity">
    <reaction evidence="2">
        <text>1-hexadecanoyl-2-(9Z-octadecenoyl)-sn-glycero-3-phosphocholine + H2O = 1-hexadecanoyl-sn-glycero-3-phosphocholine + (9Z)-octadecenoate + H(+)</text>
        <dbReference type="Rhea" id="RHEA:38779"/>
        <dbReference type="ChEBI" id="CHEBI:15377"/>
        <dbReference type="ChEBI" id="CHEBI:15378"/>
        <dbReference type="ChEBI" id="CHEBI:30823"/>
        <dbReference type="ChEBI" id="CHEBI:72998"/>
        <dbReference type="ChEBI" id="CHEBI:73001"/>
    </reaction>
    <physiologicalReaction direction="left-to-right" evidence="2">
        <dbReference type="Rhea" id="RHEA:38780"/>
    </physiologicalReaction>
</comment>
<comment type="catalytic activity">
    <reaction evidence="2">
        <text>1-octadecanoyl-2-(5Z,8Z,11Z,14Z-eicosatetraenoyl)-sn-glycero-3-phosphocholine + H2O = 1-octadecanoyl-sn-glycero-3-phosphocholine + (5Z,8Z,11Z,14Z)-eicosatetraenoate + H(+)</text>
        <dbReference type="Rhea" id="RHEA:40519"/>
        <dbReference type="ChEBI" id="CHEBI:15377"/>
        <dbReference type="ChEBI" id="CHEBI:15378"/>
        <dbReference type="ChEBI" id="CHEBI:32395"/>
        <dbReference type="ChEBI" id="CHEBI:73858"/>
        <dbReference type="ChEBI" id="CHEBI:74965"/>
    </reaction>
    <physiologicalReaction direction="left-to-right" evidence="2">
        <dbReference type="Rhea" id="RHEA:40520"/>
    </physiologicalReaction>
</comment>
<comment type="catalytic activity">
    <reaction evidence="2">
        <text>1,2-dihexadecanoyl-sn-glycero-3-phosphocholine + H2O = 1-hexadecanoyl-sn-glycero-3-phosphocholine + hexadecanoate + H(+)</text>
        <dbReference type="Rhea" id="RHEA:41223"/>
        <dbReference type="ChEBI" id="CHEBI:7896"/>
        <dbReference type="ChEBI" id="CHEBI:15377"/>
        <dbReference type="ChEBI" id="CHEBI:15378"/>
        <dbReference type="ChEBI" id="CHEBI:72998"/>
        <dbReference type="ChEBI" id="CHEBI:72999"/>
    </reaction>
    <physiologicalReaction direction="left-to-right" evidence="2">
        <dbReference type="Rhea" id="RHEA:41224"/>
    </physiologicalReaction>
</comment>
<comment type="catalytic activity">
    <reaction evidence="2">
        <text>1-hexadecanoyl-2-(9Z-octadecenoyl)-sn-glycero-3-phosphoglycerol + H2O = 1-hexadecanoyl-sn-glycero-3-phosphoglycerol + (9Z)-octadecenoate + H(+)</text>
        <dbReference type="Rhea" id="RHEA:44524"/>
        <dbReference type="ChEBI" id="CHEBI:15377"/>
        <dbReference type="ChEBI" id="CHEBI:15378"/>
        <dbReference type="ChEBI" id="CHEBI:30823"/>
        <dbReference type="ChEBI" id="CHEBI:84472"/>
        <dbReference type="ChEBI" id="CHEBI:84475"/>
    </reaction>
    <physiologicalReaction direction="left-to-right" evidence="2">
        <dbReference type="Rhea" id="RHEA:44525"/>
    </physiologicalReaction>
</comment>
<comment type="catalytic activity">
    <reaction evidence="3">
        <text>1,2-dihexadecanoyl-sn-glycero-3-phospho-(1'-sn-glycerol) + H2O = 1-hexadecanoyl-sn-glycero-3-phospho-(1'-sn-glycerol) + hexadecanoate + H(+)</text>
        <dbReference type="Rhea" id="RHEA:45472"/>
        <dbReference type="ChEBI" id="CHEBI:7896"/>
        <dbReference type="ChEBI" id="CHEBI:15377"/>
        <dbReference type="ChEBI" id="CHEBI:15378"/>
        <dbReference type="ChEBI" id="CHEBI:72829"/>
        <dbReference type="ChEBI" id="CHEBI:75158"/>
    </reaction>
    <physiologicalReaction direction="left-to-right" evidence="3">
        <dbReference type="Rhea" id="RHEA:45473"/>
    </physiologicalReaction>
</comment>
<comment type="catalytic activity">
    <reaction evidence="2">
        <text>1-hexadecanoyl-2-(9Z-octadecenoyl)-sn-glycero-3-phospho-L-serine + H2O = 1-hexadecanoyl-sn-glycero-3-phospho-L-serine + (9Z)-octadecenoate + H(+)</text>
        <dbReference type="Rhea" id="RHEA:41752"/>
        <dbReference type="ChEBI" id="CHEBI:15377"/>
        <dbReference type="ChEBI" id="CHEBI:15378"/>
        <dbReference type="ChEBI" id="CHEBI:30823"/>
        <dbReference type="ChEBI" id="CHEBI:75020"/>
        <dbReference type="ChEBI" id="CHEBI:75029"/>
    </reaction>
    <physiologicalReaction direction="left-to-right" evidence="2">
        <dbReference type="Rhea" id="RHEA:41753"/>
    </physiologicalReaction>
</comment>
<comment type="catalytic activity">
    <reaction evidence="2">
        <text>1-hexadecanoyl-2-(9Z,12Z-octadecadienoyl)-sn-glycero-3-phosphoethanolamine + H2O = 1-hexadecanoyl-sn-glycero-3-phosphoethanolamine + (9Z,12Z)-octadecadienoate + H(+)</text>
        <dbReference type="Rhea" id="RHEA:40815"/>
        <dbReference type="ChEBI" id="CHEBI:15377"/>
        <dbReference type="ChEBI" id="CHEBI:15378"/>
        <dbReference type="ChEBI" id="CHEBI:30245"/>
        <dbReference type="ChEBI" id="CHEBI:73004"/>
        <dbReference type="ChEBI" id="CHEBI:73008"/>
    </reaction>
    <physiologicalReaction direction="left-to-right" evidence="2">
        <dbReference type="Rhea" id="RHEA:40816"/>
    </physiologicalReaction>
</comment>
<comment type="catalytic activity">
    <reaction evidence="2">
        <text>1-hexadecanoyl-2-(9Z-octadecenoyl)-sn-glycero-3-phosphate + H2O = 1-hexadecanoyl-sn-glycero-3-phosphate + (9Z)-octadecenoate + H(+)</text>
        <dbReference type="Rhea" id="RHEA:63996"/>
        <dbReference type="ChEBI" id="CHEBI:15377"/>
        <dbReference type="ChEBI" id="CHEBI:15378"/>
        <dbReference type="ChEBI" id="CHEBI:30823"/>
        <dbReference type="ChEBI" id="CHEBI:57518"/>
        <dbReference type="ChEBI" id="CHEBI:64839"/>
    </reaction>
    <physiologicalReaction direction="left-to-right" evidence="2">
        <dbReference type="Rhea" id="RHEA:63997"/>
    </physiologicalReaction>
</comment>
<comment type="catalytic activity">
    <reaction evidence="2">
        <text>1-O-hexadecyl-2-acetyl-sn-glycero-3-phosphocholine + H2O = 1-O-hexadecyl-sn-glycero-3-phosphocholine + acetate + H(+)</text>
        <dbReference type="Rhea" id="RHEA:40479"/>
        <dbReference type="ChEBI" id="CHEBI:15377"/>
        <dbReference type="ChEBI" id="CHEBI:15378"/>
        <dbReference type="ChEBI" id="CHEBI:30089"/>
        <dbReference type="ChEBI" id="CHEBI:44811"/>
        <dbReference type="ChEBI" id="CHEBI:64496"/>
    </reaction>
    <physiologicalReaction direction="left-to-right" evidence="2">
        <dbReference type="Rhea" id="RHEA:40480"/>
    </physiologicalReaction>
</comment>
<comment type="cofactor">
    <cofactor evidence="2">
        <name>Ca(2+)</name>
        <dbReference type="ChEBI" id="CHEBI:29108"/>
    </cofactor>
    <text evidence="2">Binds 1 Ca(2+) ion per subunit.</text>
</comment>
<comment type="subunit">
    <text evidence="3">Interacts with PLA2R1; this interaction mediates PLA2G10 clearance and inactivation.</text>
</comment>
<comment type="subcellular location">
    <subcellularLocation>
        <location evidence="3">Secreted</location>
    </subcellularLocation>
    <subcellularLocation>
        <location evidence="3">Lysosome</location>
    </subcellularLocation>
    <subcellularLocation>
        <location evidence="3">Cytoplasmic vesicle</location>
        <location evidence="3">Secretory vesicle</location>
        <location evidence="3">Acrosome</location>
    </subcellularLocation>
</comment>
<comment type="similarity">
    <text evidence="6">Belongs to the phospholipase A2 family.</text>
</comment>
<evidence type="ECO:0000250" key="1"/>
<evidence type="ECO:0000250" key="2">
    <source>
        <dbReference type="UniProtKB" id="O15496"/>
    </source>
</evidence>
<evidence type="ECO:0000250" key="3">
    <source>
        <dbReference type="UniProtKB" id="Q9QXX3"/>
    </source>
</evidence>
<evidence type="ECO:0000255" key="4">
    <source>
        <dbReference type="PROSITE-ProRule" id="PRU10035"/>
    </source>
</evidence>
<evidence type="ECO:0000255" key="5">
    <source>
        <dbReference type="PROSITE-ProRule" id="PRU10036"/>
    </source>
</evidence>
<evidence type="ECO:0000305" key="6"/>
<organism>
    <name type="scientific">Rattus norvegicus</name>
    <name type="common">Rat</name>
    <dbReference type="NCBI Taxonomy" id="10116"/>
    <lineage>
        <taxon>Eukaryota</taxon>
        <taxon>Metazoa</taxon>
        <taxon>Chordata</taxon>
        <taxon>Craniata</taxon>
        <taxon>Vertebrata</taxon>
        <taxon>Euteleostomi</taxon>
        <taxon>Mammalia</taxon>
        <taxon>Eutheria</taxon>
        <taxon>Euarchontoglires</taxon>
        <taxon>Glires</taxon>
        <taxon>Rodentia</taxon>
        <taxon>Myomorpha</taxon>
        <taxon>Muroidea</taxon>
        <taxon>Muridae</taxon>
        <taxon>Murinae</taxon>
        <taxon>Rattus</taxon>
    </lineage>
</organism>
<feature type="signal peptide" evidence="1">
    <location>
        <begin position="1"/>
        <end position="17"/>
    </location>
</feature>
<feature type="propeptide" id="PRO_0000022768" evidence="1">
    <location>
        <begin position="18"/>
        <end position="28"/>
    </location>
</feature>
<feature type="chain" id="PRO_0000022769" description="Group 10 secretory phospholipase A2">
    <location>
        <begin position="29"/>
        <end position="151"/>
    </location>
</feature>
<feature type="active site" evidence="2">
    <location>
        <position position="74"/>
    </location>
</feature>
<feature type="active site" evidence="2">
    <location>
        <position position="119"/>
    </location>
</feature>
<feature type="binding site" evidence="1">
    <location>
        <position position="54"/>
    </location>
    <ligand>
        <name>Ca(2+)</name>
        <dbReference type="ChEBI" id="CHEBI:29108"/>
    </ligand>
</feature>
<feature type="binding site" evidence="2">
    <location>
        <position position="56"/>
    </location>
    <ligand>
        <name>Ca(2+)</name>
        <dbReference type="ChEBI" id="CHEBI:29108"/>
    </ligand>
</feature>
<feature type="binding site" evidence="2">
    <location>
        <position position="58"/>
    </location>
    <ligand>
        <name>Ca(2+)</name>
        <dbReference type="ChEBI" id="CHEBI:29108"/>
    </ligand>
</feature>
<feature type="binding site" evidence="2">
    <location>
        <position position="75"/>
    </location>
    <ligand>
        <name>Ca(2+)</name>
        <dbReference type="ChEBI" id="CHEBI:29108"/>
    </ligand>
</feature>
<feature type="disulfide bond" evidence="2">
    <location>
        <begin position="39"/>
        <end position="97"/>
    </location>
</feature>
<feature type="disulfide bond" evidence="2">
    <location>
        <begin position="53"/>
        <end position="143"/>
    </location>
</feature>
<feature type="disulfide bond" evidence="2">
    <location>
        <begin position="55"/>
        <end position="71"/>
    </location>
</feature>
<feature type="disulfide bond" evidence="2">
    <location>
        <begin position="70"/>
        <end position="125"/>
    </location>
</feature>
<feature type="disulfide bond" evidence="2">
    <location>
        <begin position="76"/>
        <end position="150"/>
    </location>
</feature>
<feature type="disulfide bond" evidence="2">
    <location>
        <begin position="77"/>
        <end position="118"/>
    </location>
</feature>
<feature type="disulfide bond" evidence="2">
    <location>
        <begin position="86"/>
        <end position="111"/>
    </location>
</feature>
<feature type="disulfide bond" evidence="2">
    <location>
        <begin position="104"/>
        <end position="116"/>
    </location>
</feature>
<accession>Q9QZT3</accession>